<reference key="1">
    <citation type="journal article" date="2006" name="J. Bacteriol.">
        <title>Complete genome sequence of Yersinia pestis strains Antiqua and Nepal516: evidence of gene reduction in an emerging pathogen.</title>
        <authorList>
            <person name="Chain P.S.G."/>
            <person name="Hu P."/>
            <person name="Malfatti S.A."/>
            <person name="Radnedge L."/>
            <person name="Larimer F."/>
            <person name="Vergez L.M."/>
            <person name="Worsham P."/>
            <person name="Chu M.C."/>
            <person name="Andersen G.L."/>
        </authorList>
    </citation>
    <scope>NUCLEOTIDE SEQUENCE [LARGE SCALE GENOMIC DNA]</scope>
    <source>
        <strain>Nepal516</strain>
    </source>
</reference>
<reference key="2">
    <citation type="submission" date="2009-04" db="EMBL/GenBank/DDBJ databases">
        <title>Yersinia pestis Nepal516A whole genome shotgun sequencing project.</title>
        <authorList>
            <person name="Plunkett G. III"/>
            <person name="Anderson B.D."/>
            <person name="Baumler D.J."/>
            <person name="Burland V."/>
            <person name="Cabot E.L."/>
            <person name="Glasner J.D."/>
            <person name="Mau B."/>
            <person name="Neeno-Eckwall E."/>
            <person name="Perna N.T."/>
            <person name="Munk A.C."/>
            <person name="Tapia R."/>
            <person name="Green L.D."/>
            <person name="Rogers Y.C."/>
            <person name="Detter J.C."/>
            <person name="Bruce D.C."/>
            <person name="Brettin T.S."/>
        </authorList>
    </citation>
    <scope>NUCLEOTIDE SEQUENCE [LARGE SCALE GENOMIC DNA]</scope>
    <source>
        <strain>Nepal516</strain>
    </source>
</reference>
<feature type="chain" id="PRO_0000333155" description="Na(+)/H(+) antiporter NhaB">
    <location>
        <begin position="1"/>
        <end position="524"/>
    </location>
</feature>
<feature type="transmembrane region" description="Helical" evidence="1">
    <location>
        <begin position="13"/>
        <end position="33"/>
    </location>
</feature>
<feature type="transmembrane region" description="Helical" evidence="1">
    <location>
        <begin position="98"/>
        <end position="118"/>
    </location>
</feature>
<feature type="transmembrane region" description="Helical" evidence="1">
    <location>
        <begin position="140"/>
        <end position="160"/>
    </location>
</feature>
<feature type="transmembrane region" description="Helical" evidence="1">
    <location>
        <begin position="239"/>
        <end position="259"/>
    </location>
</feature>
<feature type="transmembrane region" description="Helical" evidence="1">
    <location>
        <begin position="304"/>
        <end position="324"/>
    </location>
</feature>
<feature type="transmembrane region" description="Helical" evidence="1">
    <location>
        <begin position="325"/>
        <end position="345"/>
    </location>
</feature>
<feature type="transmembrane region" description="Helical" evidence="1">
    <location>
        <begin position="358"/>
        <end position="378"/>
    </location>
</feature>
<feature type="transmembrane region" description="Helical" evidence="1">
    <location>
        <begin position="448"/>
        <end position="468"/>
    </location>
</feature>
<feature type="transmembrane region" description="Helical" evidence="1">
    <location>
        <begin position="479"/>
        <end position="499"/>
    </location>
</feature>
<comment type="function">
    <text evidence="1">Na(+)/H(+) antiporter that extrudes sodium in exchange for external protons.</text>
</comment>
<comment type="catalytic activity">
    <reaction evidence="1">
        <text>2 Na(+)(in) + 3 H(+)(out) = 2 Na(+)(out) + 3 H(+)(in)</text>
        <dbReference type="Rhea" id="RHEA:29247"/>
        <dbReference type="ChEBI" id="CHEBI:15378"/>
        <dbReference type="ChEBI" id="CHEBI:29101"/>
    </reaction>
    <physiologicalReaction direction="left-to-right" evidence="1">
        <dbReference type="Rhea" id="RHEA:29248"/>
    </physiologicalReaction>
</comment>
<comment type="subcellular location">
    <subcellularLocation>
        <location evidence="1">Cell inner membrane</location>
        <topology evidence="1">Multi-pass membrane protein</topology>
    </subcellularLocation>
</comment>
<comment type="similarity">
    <text evidence="1">Belongs to the NhaB Na(+)/H(+) (TC 2.A.34) antiporter family.</text>
</comment>
<evidence type="ECO:0000255" key="1">
    <source>
        <dbReference type="HAMAP-Rule" id="MF_01599"/>
    </source>
</evidence>
<name>NHAB_YERPN</name>
<dbReference type="EMBL" id="CP000305">
    <property type="protein sequence ID" value="ABG17941.1"/>
    <property type="molecule type" value="Genomic_DNA"/>
</dbReference>
<dbReference type="EMBL" id="ACNQ01000009">
    <property type="protein sequence ID" value="EEO77059.1"/>
    <property type="molecule type" value="Genomic_DNA"/>
</dbReference>
<dbReference type="RefSeq" id="WP_002211689.1">
    <property type="nucleotide sequence ID" value="NZ_ACNQ01000009.1"/>
</dbReference>
<dbReference type="SMR" id="Q1CJ89"/>
<dbReference type="GeneID" id="57976523"/>
<dbReference type="KEGG" id="ypn:YPN_1611"/>
<dbReference type="HOGENOM" id="CLU_041110_0_0_6"/>
<dbReference type="Proteomes" id="UP000008936">
    <property type="component" value="Chromosome"/>
</dbReference>
<dbReference type="GO" id="GO:0005886">
    <property type="term" value="C:plasma membrane"/>
    <property type="evidence" value="ECO:0007669"/>
    <property type="project" value="UniProtKB-SubCell"/>
</dbReference>
<dbReference type="GO" id="GO:0015385">
    <property type="term" value="F:sodium:proton antiporter activity"/>
    <property type="evidence" value="ECO:0007669"/>
    <property type="project" value="InterPro"/>
</dbReference>
<dbReference type="HAMAP" id="MF_01599">
    <property type="entry name" value="NhaB"/>
    <property type="match status" value="1"/>
</dbReference>
<dbReference type="InterPro" id="IPR004671">
    <property type="entry name" value="Na+/H+_antiporter_NhaB"/>
</dbReference>
<dbReference type="NCBIfam" id="TIGR00774">
    <property type="entry name" value="NhaB"/>
    <property type="match status" value="1"/>
</dbReference>
<dbReference type="NCBIfam" id="NF007093">
    <property type="entry name" value="PRK09547.1"/>
    <property type="match status" value="1"/>
</dbReference>
<dbReference type="PANTHER" id="PTHR43302:SF1">
    <property type="entry name" value="NA(+)_H(+) ANTIPORTER NHAB"/>
    <property type="match status" value="1"/>
</dbReference>
<dbReference type="PANTHER" id="PTHR43302">
    <property type="entry name" value="TRANSPORTER ARSB-RELATED"/>
    <property type="match status" value="1"/>
</dbReference>
<dbReference type="Pfam" id="PF06450">
    <property type="entry name" value="NhaB"/>
    <property type="match status" value="1"/>
</dbReference>
<organism>
    <name type="scientific">Yersinia pestis bv. Antiqua (strain Nepal516)</name>
    <dbReference type="NCBI Taxonomy" id="377628"/>
    <lineage>
        <taxon>Bacteria</taxon>
        <taxon>Pseudomonadati</taxon>
        <taxon>Pseudomonadota</taxon>
        <taxon>Gammaproteobacteria</taxon>
        <taxon>Enterobacterales</taxon>
        <taxon>Yersiniaceae</taxon>
        <taxon>Yersinia</taxon>
    </lineage>
</organism>
<proteinExistence type="inferred from homology"/>
<sequence length="524" mass="57476">MDITNRQAVLKNFLGNSPDWYKLAIMGFLIINPLVFFFVSPFVAGWMLVIEFIFTLAMALKCYPLQPGGLLAIQAVAIGMTSPHQVAEEIANNLEVLLLLVFMVAGIYFMKQLLLFVFTKLLLNIRSKTILSLAFCLASAFLSAFLDALTVIAVVISVSVGFYTIYHNVTSNHSDKDITDDSGIDNQDSHETLEQFRAFLRSLMMHAGVGTALGGVMTMVGEPQNLIIAKSAGWNFADFFIRMLPVTLPVFIFGLLVCLLVEKFKLFGYGAQLPERVRQVLTEYDQQANAKRTKQEKMKLIVQAIIGVWLVLALALHLAEVGLVGLSVIILATSFCGITNEHSLGKAFQEALPFTALLTVFFAVVAVIIEQSLFTPIIQFVLQASPSAQLSLFYLFNGLLSSVSDNVFVGTVYINEARSAFEHGIVSLQQFELLAVAINTGTNLPSVATPNGQAAFLFLLTSALAPLIRLSYGRMVYMALPYTLVMTIVGLLGVEFLLVPMTEWLTQAGWISLPHITNGVAIPH</sequence>
<protein>
    <recommendedName>
        <fullName evidence="1">Na(+)/H(+) antiporter NhaB</fullName>
    </recommendedName>
    <alternativeName>
        <fullName evidence="1">Sodium/proton antiporter NhaB</fullName>
    </alternativeName>
</protein>
<gene>
    <name evidence="1" type="primary">nhaB</name>
    <name type="ordered locus">YPN_1611</name>
    <name type="ORF">YP516_1793</name>
</gene>
<accession>Q1CJ89</accession>
<accession>C4GSP9</accession>
<keyword id="KW-0050">Antiport</keyword>
<keyword id="KW-0997">Cell inner membrane</keyword>
<keyword id="KW-1003">Cell membrane</keyword>
<keyword id="KW-0406">Ion transport</keyword>
<keyword id="KW-0472">Membrane</keyword>
<keyword id="KW-0915">Sodium</keyword>
<keyword id="KW-0739">Sodium transport</keyword>
<keyword id="KW-0812">Transmembrane</keyword>
<keyword id="KW-1133">Transmembrane helix</keyword>
<keyword id="KW-0813">Transport</keyword>